<reference key="1">
    <citation type="journal article" date="2008" name="Nat. Biotechnol.">
        <title>Genome sequencing and analysis of the filamentous fungus Penicillium chrysogenum.</title>
        <authorList>
            <person name="van den Berg M.A."/>
            <person name="Albang R."/>
            <person name="Albermann K."/>
            <person name="Badger J.H."/>
            <person name="Daran J.-M."/>
            <person name="Driessen A.J.M."/>
            <person name="Garcia-Estrada C."/>
            <person name="Fedorova N.D."/>
            <person name="Harris D.M."/>
            <person name="Heijne W.H.M."/>
            <person name="Joardar V.S."/>
            <person name="Kiel J.A.K.W."/>
            <person name="Kovalchuk A."/>
            <person name="Martin J.F."/>
            <person name="Nierman W.C."/>
            <person name="Nijland J.G."/>
            <person name="Pronk J.T."/>
            <person name="Roubos J.A."/>
            <person name="van der Klei I.J."/>
            <person name="van Peij N.N.M.E."/>
            <person name="Veenhuis M."/>
            <person name="von Doehren H."/>
            <person name="Wagner C."/>
            <person name="Wortman J.R."/>
            <person name="Bovenberg R.A.L."/>
        </authorList>
    </citation>
    <scope>NUCLEOTIDE SEQUENCE [LARGE SCALE GENOMIC DNA]</scope>
    <source>
        <strain>ATCC 28089 / DSM 1075 / NRRL 1951 / Wisconsin 54-1255</strain>
    </source>
</reference>
<proteinExistence type="inferred from homology"/>
<organism>
    <name type="scientific">Penicillium rubens (strain ATCC 28089 / DSM 1075 / NRRL 1951 / Wisconsin 54-1255)</name>
    <name type="common">Penicillium chrysogenum</name>
    <dbReference type="NCBI Taxonomy" id="500485"/>
    <lineage>
        <taxon>Eukaryota</taxon>
        <taxon>Fungi</taxon>
        <taxon>Dikarya</taxon>
        <taxon>Ascomycota</taxon>
        <taxon>Pezizomycotina</taxon>
        <taxon>Eurotiomycetes</taxon>
        <taxon>Eurotiomycetidae</taxon>
        <taxon>Eurotiales</taxon>
        <taxon>Aspergillaceae</taxon>
        <taxon>Penicillium</taxon>
        <taxon>Penicillium chrysogenum species complex</taxon>
    </lineage>
</organism>
<name>AMPP2_PENRW</name>
<gene>
    <name type="ORF">Pc16g13390</name>
</gene>
<dbReference type="EC" id="3.4.11.9"/>
<dbReference type="EMBL" id="AM920431">
    <property type="protein sequence ID" value="CAP94009.1"/>
    <property type="molecule type" value="Genomic_DNA"/>
</dbReference>
<dbReference type="RefSeq" id="XP_002561638.1">
    <property type="nucleotide sequence ID" value="XM_002561592.1"/>
</dbReference>
<dbReference type="SMR" id="B6HAN0"/>
<dbReference type="STRING" id="500485.B6HAN0"/>
<dbReference type="VEuPathDB" id="FungiDB:PCH_Pc16g13390"/>
<dbReference type="eggNOG" id="KOG2737">
    <property type="taxonomic scope" value="Eukaryota"/>
</dbReference>
<dbReference type="HOGENOM" id="CLU_017266_1_2_1"/>
<dbReference type="OMA" id="YELRMIR"/>
<dbReference type="OrthoDB" id="10261878at2759"/>
<dbReference type="BioCyc" id="PCHR:PC16G13390-MONOMER"/>
<dbReference type="Proteomes" id="UP000000724">
    <property type="component" value="Contig Pc00c16"/>
</dbReference>
<dbReference type="GO" id="GO:0030145">
    <property type="term" value="F:manganese ion binding"/>
    <property type="evidence" value="ECO:0007669"/>
    <property type="project" value="InterPro"/>
</dbReference>
<dbReference type="GO" id="GO:0070006">
    <property type="term" value="F:metalloaminopeptidase activity"/>
    <property type="evidence" value="ECO:0007669"/>
    <property type="project" value="InterPro"/>
</dbReference>
<dbReference type="GO" id="GO:0006508">
    <property type="term" value="P:proteolysis"/>
    <property type="evidence" value="ECO:0007669"/>
    <property type="project" value="UniProtKB-KW"/>
</dbReference>
<dbReference type="CDD" id="cd01087">
    <property type="entry name" value="Prolidase"/>
    <property type="match status" value="1"/>
</dbReference>
<dbReference type="Gene3D" id="3.90.230.10">
    <property type="entry name" value="Creatinase/methionine aminopeptidase superfamily"/>
    <property type="match status" value="1"/>
</dbReference>
<dbReference type="Gene3D" id="3.40.350.10">
    <property type="entry name" value="Creatinase/prolidase N-terminal domain"/>
    <property type="match status" value="1"/>
</dbReference>
<dbReference type="InterPro" id="IPR007865">
    <property type="entry name" value="Aminopep_P_N"/>
</dbReference>
<dbReference type="InterPro" id="IPR029149">
    <property type="entry name" value="Creatin/AminoP/Spt16_N"/>
</dbReference>
<dbReference type="InterPro" id="IPR036005">
    <property type="entry name" value="Creatinase/aminopeptidase-like"/>
</dbReference>
<dbReference type="InterPro" id="IPR000994">
    <property type="entry name" value="Pept_M24"/>
</dbReference>
<dbReference type="InterPro" id="IPR001131">
    <property type="entry name" value="Peptidase_M24B_aminopep-P_CS"/>
</dbReference>
<dbReference type="InterPro" id="IPR052433">
    <property type="entry name" value="X-Pro_dipept-like"/>
</dbReference>
<dbReference type="PANTHER" id="PTHR43226">
    <property type="entry name" value="XAA-PRO AMINOPEPTIDASE 3"/>
    <property type="match status" value="1"/>
</dbReference>
<dbReference type="PANTHER" id="PTHR43226:SF3">
    <property type="entry name" value="XAA-PRO AMINOPEPTIDASE AN0832-RELATED"/>
    <property type="match status" value="1"/>
</dbReference>
<dbReference type="Pfam" id="PF05195">
    <property type="entry name" value="AMP_N"/>
    <property type="match status" value="1"/>
</dbReference>
<dbReference type="Pfam" id="PF00557">
    <property type="entry name" value="Peptidase_M24"/>
    <property type="match status" value="1"/>
</dbReference>
<dbReference type="SMART" id="SM01011">
    <property type="entry name" value="AMP_N"/>
    <property type="match status" value="1"/>
</dbReference>
<dbReference type="SUPFAM" id="SSF55920">
    <property type="entry name" value="Creatinase/aminopeptidase"/>
    <property type="match status" value="1"/>
</dbReference>
<dbReference type="SUPFAM" id="SSF53092">
    <property type="entry name" value="Creatinase/prolidase N-terminal domain"/>
    <property type="match status" value="1"/>
</dbReference>
<dbReference type="PROSITE" id="PS00491">
    <property type="entry name" value="PROLINE_PEPTIDASE"/>
    <property type="match status" value="1"/>
</dbReference>
<keyword id="KW-0031">Aminopeptidase</keyword>
<keyword id="KW-0378">Hydrolase</keyword>
<keyword id="KW-0464">Manganese</keyword>
<keyword id="KW-0479">Metal-binding</keyword>
<keyword id="KW-0482">Metalloprotease</keyword>
<keyword id="KW-0645">Protease</keyword>
<keyword id="KW-1185">Reference proteome</keyword>
<comment type="function">
    <text evidence="1">Catalyzes the removal of a penultimate prolyl residue from the N-termini of peptides.</text>
</comment>
<comment type="catalytic activity">
    <reaction>
        <text>Release of any N-terminal amino acid, including proline, that is linked to proline, even from a dipeptide or tripeptide.</text>
        <dbReference type="EC" id="3.4.11.9"/>
    </reaction>
</comment>
<comment type="cofactor">
    <cofactor evidence="1">
        <name>Mn(2+)</name>
        <dbReference type="ChEBI" id="CHEBI:29035"/>
    </cofactor>
    <text evidence="1">Binds 2 manganese ions per subunit.</text>
</comment>
<comment type="similarity">
    <text evidence="2">Belongs to the peptidase M24B family.</text>
</comment>
<evidence type="ECO:0000250" key="1"/>
<evidence type="ECO:0000305" key="2"/>
<protein>
    <recommendedName>
        <fullName>Probable Xaa-Pro aminopeptidase Pc16g13390</fullName>
        <ecNumber>3.4.11.9</ecNumber>
    </recommendedName>
    <alternativeName>
        <fullName>Aminoacylproline aminopeptidase</fullName>
    </alternativeName>
    <alternativeName>
        <fullName>Prolidase</fullName>
    </alternativeName>
</protein>
<accession>B6HAN0</accession>
<feature type="chain" id="PRO_0000411845" description="Probable Xaa-Pro aminopeptidase Pc16g13390">
    <location>
        <begin position="1"/>
        <end position="505"/>
    </location>
</feature>
<feature type="binding site" evidence="1">
    <location>
        <position position="287"/>
    </location>
    <ligand>
        <name>Mn(2+)</name>
        <dbReference type="ChEBI" id="CHEBI:29035"/>
        <label>2</label>
    </ligand>
</feature>
<feature type="binding site" evidence="1">
    <location>
        <position position="298"/>
    </location>
    <ligand>
        <name>Mn(2+)</name>
        <dbReference type="ChEBI" id="CHEBI:29035"/>
        <label>1</label>
    </ligand>
</feature>
<feature type="binding site" evidence="1">
    <location>
        <position position="298"/>
    </location>
    <ligand>
        <name>Mn(2+)</name>
        <dbReference type="ChEBI" id="CHEBI:29035"/>
        <label>2</label>
    </ligand>
</feature>
<feature type="binding site" evidence="1">
    <location>
        <position position="436"/>
    </location>
    <ligand>
        <name>Mn(2+)</name>
        <dbReference type="ChEBI" id="CHEBI:29035"/>
        <label>1</label>
    </ligand>
</feature>
<feature type="binding site" evidence="1">
    <location>
        <position position="475"/>
    </location>
    <ligand>
        <name>Mn(2+)</name>
        <dbReference type="ChEBI" id="CHEBI:29035"/>
        <label>1</label>
    </ligand>
</feature>
<feature type="binding site" evidence="1">
    <location>
        <position position="475"/>
    </location>
    <ligand>
        <name>Mn(2+)</name>
        <dbReference type="ChEBI" id="CHEBI:29035"/>
        <label>2</label>
    </ligand>
</feature>
<sequence length="505" mass="57092">MRADSGAQGSAAQDIMINPLDSYNIRVVTPTSCDKYPGRYTSPYSAHRKHHARNVARKLGASSGLIFLSGQPTINLRDSDQSRPFRQRRYFYYLSGVDEPDCSLTYDIEQDLLSLYVPDFDLHRAIWMGPTLSREDAQDRYDVDHVRYHASLKYELQAWLDERKQGSELYLIHDSEKPEHLPKDLPLNLEQLRPAMDTARGVKDEYEIRMIRQANKVSGLAHRRILESIQSMSNESQIEGSFLNTCISHGARNQAYQIIAASGPNAAVLHYDRNNETLNKKPLVCLDAGAEWNCYASDVTRTFPLTGEWPSDYVRDIYKLVERMQDECIRLIRKGTRYLSLHNLAHDIAIEGLLALGVFKNGTIHELRQSGVSKVFFPHGLGHHVGLEVHDVSERSIMAIQRSDELQYRPILNSTCLPPCTLSAPLLEEGMVVTVEPGLYFSPLAMANARHQPYARYIDFDVAEKYVHIGGVRIEDDILVTATGYENLTTAPKGEEMLAIIRGSA</sequence>